<organism>
    <name type="scientific">Cryptococcus neoformans var. neoformans serotype D (strain JEC21 / ATCC MYA-565)</name>
    <name type="common">Filobasidiella neoformans</name>
    <dbReference type="NCBI Taxonomy" id="214684"/>
    <lineage>
        <taxon>Eukaryota</taxon>
        <taxon>Fungi</taxon>
        <taxon>Dikarya</taxon>
        <taxon>Basidiomycota</taxon>
        <taxon>Agaricomycotina</taxon>
        <taxon>Tremellomycetes</taxon>
        <taxon>Tremellales</taxon>
        <taxon>Cryptococcaceae</taxon>
        <taxon>Cryptococcus</taxon>
        <taxon>Cryptococcus neoformans species complex</taxon>
    </lineage>
</organism>
<gene>
    <name type="ordered locus">CNI00690</name>
</gene>
<reference key="1">
    <citation type="journal article" date="2005" name="Science">
        <title>The genome of the basidiomycetous yeast and human pathogen Cryptococcus neoformans.</title>
        <authorList>
            <person name="Loftus B.J."/>
            <person name="Fung E."/>
            <person name="Roncaglia P."/>
            <person name="Rowley D."/>
            <person name="Amedeo P."/>
            <person name="Bruno D."/>
            <person name="Vamathevan J."/>
            <person name="Miranda M."/>
            <person name="Anderson I.J."/>
            <person name="Fraser J.A."/>
            <person name="Allen J.E."/>
            <person name="Bosdet I.E."/>
            <person name="Brent M.R."/>
            <person name="Chiu R."/>
            <person name="Doering T.L."/>
            <person name="Donlin M.J."/>
            <person name="D'Souza C.A."/>
            <person name="Fox D.S."/>
            <person name="Grinberg V."/>
            <person name="Fu J."/>
            <person name="Fukushima M."/>
            <person name="Haas B.J."/>
            <person name="Huang J.C."/>
            <person name="Janbon G."/>
            <person name="Jones S.J.M."/>
            <person name="Koo H.L."/>
            <person name="Krzywinski M.I."/>
            <person name="Kwon-Chung K.J."/>
            <person name="Lengeler K.B."/>
            <person name="Maiti R."/>
            <person name="Marra M.A."/>
            <person name="Marra R.E."/>
            <person name="Mathewson C.A."/>
            <person name="Mitchell T.G."/>
            <person name="Pertea M."/>
            <person name="Riggs F.R."/>
            <person name="Salzberg S.L."/>
            <person name="Schein J.E."/>
            <person name="Shvartsbeyn A."/>
            <person name="Shin H."/>
            <person name="Shumway M."/>
            <person name="Specht C.A."/>
            <person name="Suh B.B."/>
            <person name="Tenney A."/>
            <person name="Utterback T.R."/>
            <person name="Wickes B.L."/>
            <person name="Wortman J.R."/>
            <person name="Wye N.H."/>
            <person name="Kronstad J.W."/>
            <person name="Lodge J.K."/>
            <person name="Heitman J."/>
            <person name="Davis R.W."/>
            <person name="Fraser C.M."/>
            <person name="Hyman R.W."/>
        </authorList>
    </citation>
    <scope>NUCLEOTIDE SEQUENCE [LARGE SCALE GENOMIC DNA]</scope>
    <source>
        <strain>JEC21 / ATCC MYA-565</strain>
    </source>
</reference>
<keyword id="KW-0256">Endoplasmic reticulum</keyword>
<keyword id="KW-0275">Fatty acid biosynthesis</keyword>
<keyword id="KW-0276">Fatty acid metabolism</keyword>
<keyword id="KW-0444">Lipid biosynthesis</keyword>
<keyword id="KW-0443">Lipid metabolism</keyword>
<keyword id="KW-0472">Membrane</keyword>
<keyword id="KW-0521">NADP</keyword>
<keyword id="KW-0560">Oxidoreductase</keyword>
<keyword id="KW-1185">Reference proteome</keyword>
<keyword id="KW-0812">Transmembrane</keyword>
<keyword id="KW-1133">Transmembrane helix</keyword>
<comment type="function">
    <text evidence="4">Component of the microsomal membrane bound fatty acid elongation system, which produces the 26-carbon very long-chain fatty acids (VLCFA) from palmitate. Catalyzes the reduction of the 3-ketoacyl-CoA intermediate that is formed in each cycle of fatty acid elongation. VLCFAs serve as precursors for ceramide and sphingolipids.</text>
</comment>
<comment type="catalytic activity">
    <reaction evidence="4">
        <text>a very-long-chain (3R)-3-hydroxyacyl-CoA + NADP(+) = a very-long-chain 3-oxoacyl-CoA + NADPH + H(+)</text>
        <dbReference type="Rhea" id="RHEA:48680"/>
        <dbReference type="ChEBI" id="CHEBI:15378"/>
        <dbReference type="ChEBI" id="CHEBI:57783"/>
        <dbReference type="ChEBI" id="CHEBI:58349"/>
        <dbReference type="ChEBI" id="CHEBI:85440"/>
        <dbReference type="ChEBI" id="CHEBI:90725"/>
        <dbReference type="EC" id="1.1.1.330"/>
    </reaction>
</comment>
<comment type="pathway">
    <text evidence="3">Lipid metabolism; fatty acid biosynthesis.</text>
</comment>
<comment type="subcellular location">
    <subcellularLocation>
        <location evidence="4">Endoplasmic reticulum membrane</location>
        <topology evidence="4">Single-pass membrane protein</topology>
    </subcellularLocation>
</comment>
<comment type="similarity">
    <text evidence="4">Belongs to the short-chain dehydrogenases/reductases (SDR) family.</text>
</comment>
<feature type="chain" id="PRO_0000357307" description="Very-long-chain 3-oxoacyl-CoA reductase">
    <location>
        <begin position="1"/>
        <end position="361"/>
    </location>
</feature>
<feature type="transmembrane region" description="Helical" evidence="4">
    <location>
        <begin position="32"/>
        <end position="52"/>
    </location>
</feature>
<feature type="active site" description="Proton donor" evidence="2">
    <location>
        <position position="236"/>
    </location>
</feature>
<feature type="active site" description="Lowers pKa of active site Tyr" evidence="2">
    <location>
        <position position="240"/>
    </location>
</feature>
<feature type="binding site" evidence="1">
    <location>
        <position position="79"/>
    </location>
    <ligand>
        <name>NADP(+)</name>
        <dbReference type="ChEBI" id="CHEBI:58349"/>
    </ligand>
</feature>
<feature type="binding site" evidence="1">
    <location>
        <position position="133"/>
    </location>
    <ligand>
        <name>NADP(+)</name>
        <dbReference type="ChEBI" id="CHEBI:58349"/>
    </ligand>
</feature>
<feature type="binding site" evidence="2">
    <location>
        <position position="163"/>
    </location>
    <ligand>
        <name>NADP(+)</name>
        <dbReference type="ChEBI" id="CHEBI:58349"/>
    </ligand>
</feature>
<feature type="binding site" evidence="1">
    <location>
        <position position="198"/>
    </location>
    <ligand>
        <name>NADP(+)</name>
        <dbReference type="ChEBI" id="CHEBI:58349"/>
    </ligand>
</feature>
<feature type="binding site" evidence="2">
    <location>
        <position position="236"/>
    </location>
    <ligand>
        <name>NADP(+)</name>
        <dbReference type="ChEBI" id="CHEBI:58349"/>
    </ligand>
</feature>
<feature type="binding site" evidence="2">
    <location>
        <position position="240"/>
    </location>
    <ligand>
        <name>NADP(+)</name>
        <dbReference type="ChEBI" id="CHEBI:58349"/>
    </ligand>
</feature>
<feature type="binding site" evidence="2">
    <location>
        <position position="269"/>
    </location>
    <ligand>
        <name>NADP(+)</name>
        <dbReference type="ChEBI" id="CHEBI:58349"/>
    </ligand>
</feature>
<feature type="binding site" evidence="1">
    <location>
        <position position="271"/>
    </location>
    <ligand>
        <name>NADP(+)</name>
        <dbReference type="ChEBI" id="CHEBI:58349"/>
    </ligand>
</feature>
<protein>
    <recommendedName>
        <fullName evidence="4">Very-long-chain 3-oxoacyl-CoA reductase</fullName>
        <ecNumber evidence="4">1.1.1.330</ecNumber>
    </recommendedName>
    <alternativeName>
        <fullName evidence="4">3-ketoacyl-CoA reductase</fullName>
        <shortName evidence="4">3-ketoreductase</shortName>
        <shortName evidence="4">KAR</shortName>
    </alternativeName>
    <alternativeName>
        <fullName evidence="4">Microsomal beta-keto-reductase</fullName>
    </alternativeName>
</protein>
<sequence length="361" mass="39197">MVADTVHVGQHLAGHPSVHLFGHEIVLDVSIPALILSTVGAAFLLRYTLSIFRLFLELTVLPGKDIKSFQSRKGETWAVVTGCTSGIGLEFARQLAAKKFNIILVGRRQSALTDLSKEIESKYDVHTKSVTVDVSTPGSARDDALTQLELLAQNLDVGILINNVGASHSMPVAFHETERSEMSRIIETNVTWTYLVTRSILPSMVARSKQKGAPKSLVITIGSLSGRIPSPLLASYSGTKAALATWTKALAEEVKPQGVIVELVQAAFVVSNMSKIRKSSPFVPTPAPFVRSTLNSIGLPRGAQGRPHERTPFWSHAILDYVVGFAGYVSEMAGIKVILGMHKDIRKRALKKAARDEKKAE</sequence>
<accession>P0CR34</accession>
<accession>Q55NM3</accession>
<accession>Q5KC11</accession>
<proteinExistence type="inferred from homology"/>
<dbReference type="EC" id="1.1.1.330" evidence="4"/>
<dbReference type="EMBL" id="AE017349">
    <property type="protein sequence ID" value="AAW45449.1"/>
    <property type="molecule type" value="Genomic_DNA"/>
</dbReference>
<dbReference type="RefSeq" id="XP_572756.1">
    <property type="nucleotide sequence ID" value="XM_572756.2"/>
</dbReference>
<dbReference type="SMR" id="P0CR34"/>
<dbReference type="FunCoup" id="P0CR34">
    <property type="interactions" value="392"/>
</dbReference>
<dbReference type="STRING" id="214684.P0CR34"/>
<dbReference type="PaxDb" id="214684-P0CR34"/>
<dbReference type="EnsemblFungi" id="AAW45449">
    <property type="protein sequence ID" value="AAW45449"/>
    <property type="gene ID" value="CNI00690"/>
</dbReference>
<dbReference type="GeneID" id="3259634"/>
<dbReference type="KEGG" id="cne:CNI00690"/>
<dbReference type="VEuPathDB" id="FungiDB:CNI00690"/>
<dbReference type="eggNOG" id="KOG1014">
    <property type="taxonomic scope" value="Eukaryota"/>
</dbReference>
<dbReference type="HOGENOM" id="CLU_010194_38_0_1"/>
<dbReference type="InParanoid" id="P0CR34"/>
<dbReference type="OMA" id="LVAPGMM"/>
<dbReference type="OrthoDB" id="5545019at2759"/>
<dbReference type="UniPathway" id="UPA00094"/>
<dbReference type="Proteomes" id="UP000002149">
    <property type="component" value="Chromosome 9"/>
</dbReference>
<dbReference type="GO" id="GO:0005783">
    <property type="term" value="C:endoplasmic reticulum"/>
    <property type="evidence" value="ECO:0000318"/>
    <property type="project" value="GO_Central"/>
</dbReference>
<dbReference type="GO" id="GO:0005789">
    <property type="term" value="C:endoplasmic reticulum membrane"/>
    <property type="evidence" value="ECO:0007669"/>
    <property type="project" value="UniProtKB-SubCell"/>
</dbReference>
<dbReference type="GO" id="GO:0045703">
    <property type="term" value="F:ketoreductase activity"/>
    <property type="evidence" value="ECO:0007669"/>
    <property type="project" value="UniProtKB-UniRule"/>
</dbReference>
<dbReference type="GO" id="GO:0141040">
    <property type="term" value="F:very-long-chain 3-oxoacyl-CoA reductase activity"/>
    <property type="evidence" value="ECO:0007669"/>
    <property type="project" value="UniProtKB-EC"/>
</dbReference>
<dbReference type="GO" id="GO:0030497">
    <property type="term" value="P:fatty acid elongation"/>
    <property type="evidence" value="ECO:0000318"/>
    <property type="project" value="GO_Central"/>
</dbReference>
<dbReference type="CDD" id="cd05356">
    <property type="entry name" value="17beta-HSD1_like_SDR_c"/>
    <property type="match status" value="1"/>
</dbReference>
<dbReference type="FunFam" id="3.40.50.720:FF:000640">
    <property type="entry name" value="Very-long-chain 3-oxoacyl-CoA reductase"/>
    <property type="match status" value="1"/>
</dbReference>
<dbReference type="Gene3D" id="3.40.50.720">
    <property type="entry name" value="NAD(P)-binding Rossmann-like Domain"/>
    <property type="match status" value="1"/>
</dbReference>
<dbReference type="HAMAP" id="MF_03107">
    <property type="entry name" value="3_ketoreductase"/>
    <property type="match status" value="1"/>
</dbReference>
<dbReference type="InterPro" id="IPR027533">
    <property type="entry name" value="3_ketoreductase_fungal"/>
</dbReference>
<dbReference type="InterPro" id="IPR036291">
    <property type="entry name" value="NAD(P)-bd_dom_sf"/>
</dbReference>
<dbReference type="InterPro" id="IPR020904">
    <property type="entry name" value="Sc_DH/Rdtase_CS"/>
</dbReference>
<dbReference type="InterPro" id="IPR002347">
    <property type="entry name" value="SDR_fam"/>
</dbReference>
<dbReference type="PANTHER" id="PTHR43086:SF2">
    <property type="entry name" value="HYDROXYSTEROID DEHYDROGENASE-LIKE PROTEIN 1"/>
    <property type="match status" value="1"/>
</dbReference>
<dbReference type="PANTHER" id="PTHR43086">
    <property type="entry name" value="VERY-LONG-CHAIN 3-OXOOACYL-COA REDUCTASE"/>
    <property type="match status" value="1"/>
</dbReference>
<dbReference type="Pfam" id="PF00106">
    <property type="entry name" value="adh_short"/>
    <property type="match status" value="1"/>
</dbReference>
<dbReference type="PIRSF" id="PIRSF000126">
    <property type="entry name" value="11-beta-HSD1"/>
    <property type="match status" value="1"/>
</dbReference>
<dbReference type="PRINTS" id="PR00081">
    <property type="entry name" value="GDHRDH"/>
</dbReference>
<dbReference type="PRINTS" id="PR00080">
    <property type="entry name" value="SDRFAMILY"/>
</dbReference>
<dbReference type="SUPFAM" id="SSF51735">
    <property type="entry name" value="NAD(P)-binding Rossmann-fold domains"/>
    <property type="match status" value="1"/>
</dbReference>
<dbReference type="PROSITE" id="PS00061">
    <property type="entry name" value="ADH_SHORT"/>
    <property type="match status" value="1"/>
</dbReference>
<evidence type="ECO:0000250" key="1">
    <source>
        <dbReference type="UniProtKB" id="L0E2Z4"/>
    </source>
</evidence>
<evidence type="ECO:0000250" key="2">
    <source>
        <dbReference type="UniProtKB" id="O93868"/>
    </source>
</evidence>
<evidence type="ECO:0000250" key="3">
    <source>
        <dbReference type="UniProtKB" id="P38286"/>
    </source>
</evidence>
<evidence type="ECO:0000255" key="4">
    <source>
        <dbReference type="HAMAP-Rule" id="MF_03107"/>
    </source>
</evidence>
<name>MKAR_CRYNJ</name>